<dbReference type="EMBL" id="BX511124">
    <property type="protein sequence ID" value="CAK04840.1"/>
    <property type="molecule type" value="Genomic_DNA"/>
</dbReference>
<dbReference type="EMBL" id="BC125880">
    <property type="protein sequence ID" value="AAI25881.1"/>
    <property type="molecule type" value="mRNA"/>
</dbReference>
<dbReference type="RefSeq" id="NP_001038430.2">
    <property type="nucleotide sequence ID" value="NM_001044965.2"/>
</dbReference>
<dbReference type="RefSeq" id="XP_017207426.1">
    <property type="nucleotide sequence ID" value="XM_017351937.1"/>
</dbReference>
<dbReference type="SMR" id="Q1LWV7"/>
<dbReference type="FunCoup" id="Q1LWV7">
    <property type="interactions" value="594"/>
</dbReference>
<dbReference type="STRING" id="7955.ENSDARP00000085993"/>
<dbReference type="PaxDb" id="7955-ENSDARP00000085993"/>
<dbReference type="Ensembl" id="ENSDART00000091560">
    <property type="protein sequence ID" value="ENSDARP00000085993"/>
    <property type="gene ID" value="ENSDARG00000062951"/>
</dbReference>
<dbReference type="Ensembl" id="ENSDART00000185684">
    <property type="protein sequence ID" value="ENSDARP00000152218"/>
    <property type="gene ID" value="ENSDARG00000068763"/>
</dbReference>
<dbReference type="GeneID" id="561678"/>
<dbReference type="KEGG" id="dre:561678"/>
<dbReference type="AGR" id="ZFIN:ZDB-GENE-050419-140"/>
<dbReference type="CTD" id="57707"/>
<dbReference type="ZFIN" id="ZDB-GENE-050419-140">
    <property type="gene designation" value="meak7"/>
</dbReference>
<dbReference type="eggNOG" id="KOG2557">
    <property type="taxonomic scope" value="Eukaryota"/>
</dbReference>
<dbReference type="HOGENOM" id="CLU_036763_2_0_1"/>
<dbReference type="InParanoid" id="Q1LWV7"/>
<dbReference type="OMA" id="CGRITHR"/>
<dbReference type="OrthoDB" id="289228at2759"/>
<dbReference type="PhylomeDB" id="Q1LWV7"/>
<dbReference type="TreeFam" id="TF316541"/>
<dbReference type="PRO" id="PR:Q1LWV7"/>
<dbReference type="Proteomes" id="UP000000437">
    <property type="component" value="Chromosome 18"/>
</dbReference>
<dbReference type="Bgee" id="ENSDARG00000062951">
    <property type="expression patterns" value="Expressed in testis and 20 other cell types or tissues"/>
</dbReference>
<dbReference type="ExpressionAtlas" id="Q1LWV7">
    <property type="expression patterns" value="baseline and differential"/>
</dbReference>
<dbReference type="GO" id="GO:0005737">
    <property type="term" value="C:cytoplasm"/>
    <property type="evidence" value="ECO:0000250"/>
    <property type="project" value="UniProtKB"/>
</dbReference>
<dbReference type="GO" id="GO:0005765">
    <property type="term" value="C:lysosomal membrane"/>
    <property type="evidence" value="ECO:0000250"/>
    <property type="project" value="UniProtKB"/>
</dbReference>
<dbReference type="GO" id="GO:0016020">
    <property type="term" value="C:membrane"/>
    <property type="evidence" value="ECO:0000250"/>
    <property type="project" value="UniProtKB"/>
</dbReference>
<dbReference type="GO" id="GO:0005634">
    <property type="term" value="C:nucleus"/>
    <property type="evidence" value="ECO:0000318"/>
    <property type="project" value="GO_Central"/>
</dbReference>
<dbReference type="GO" id="GO:0150032">
    <property type="term" value="P:positive regulation of protein localization to lysosome"/>
    <property type="evidence" value="ECO:0000250"/>
    <property type="project" value="UniProtKB"/>
</dbReference>
<dbReference type="GO" id="GO:0030334">
    <property type="term" value="P:regulation of cell migration"/>
    <property type="evidence" value="ECO:0000250"/>
    <property type="project" value="UniProtKB"/>
</dbReference>
<dbReference type="GO" id="GO:0042127">
    <property type="term" value="P:regulation of cell population proliferation"/>
    <property type="evidence" value="ECO:0000250"/>
    <property type="project" value="UniProtKB"/>
</dbReference>
<dbReference type="GO" id="GO:0043200">
    <property type="term" value="P:response to amino acid"/>
    <property type="evidence" value="ECO:0000250"/>
    <property type="project" value="UniProtKB"/>
</dbReference>
<dbReference type="GO" id="GO:0032868">
    <property type="term" value="P:response to insulin"/>
    <property type="evidence" value="ECO:0000250"/>
    <property type="project" value="UniProtKB"/>
</dbReference>
<dbReference type="GO" id="GO:0031667">
    <property type="term" value="P:response to nutrient levels"/>
    <property type="evidence" value="ECO:0000250"/>
    <property type="project" value="UniProtKB"/>
</dbReference>
<dbReference type="GO" id="GO:0006979">
    <property type="term" value="P:response to oxidative stress"/>
    <property type="evidence" value="ECO:0000318"/>
    <property type="project" value="GO_Central"/>
</dbReference>
<dbReference type="GO" id="GO:0031929">
    <property type="term" value="P:TOR signaling"/>
    <property type="evidence" value="ECO:0000250"/>
    <property type="project" value="UniProtKB"/>
</dbReference>
<dbReference type="InterPro" id="IPR006571">
    <property type="entry name" value="TLDc_dom"/>
</dbReference>
<dbReference type="PANTHER" id="PTHR23354:SF131">
    <property type="entry name" value="MTOR-ASSOCIATED PROTEIN MEAK7"/>
    <property type="match status" value="1"/>
</dbReference>
<dbReference type="PANTHER" id="PTHR23354">
    <property type="entry name" value="NUCLEOLAR PROTEIN 7/ESTROGEN RECEPTOR COACTIVATOR-RELATED"/>
    <property type="match status" value="1"/>
</dbReference>
<dbReference type="Pfam" id="PF07534">
    <property type="entry name" value="TLD"/>
    <property type="match status" value="1"/>
</dbReference>
<dbReference type="SMART" id="SM00584">
    <property type="entry name" value="TLDc"/>
    <property type="match status" value="1"/>
</dbReference>
<dbReference type="PROSITE" id="PS51886">
    <property type="entry name" value="TLDC"/>
    <property type="match status" value="1"/>
</dbReference>
<protein>
    <recommendedName>
        <fullName evidence="4">MTOR-associated protein MEAK7</fullName>
        <shortName evidence="4">MEAK7</shortName>
    </recommendedName>
    <alternativeName>
        <fullName>TBC/LysM-associated domain-containing protein 1</fullName>
    </alternativeName>
    <alternativeName>
        <fullName>TLD domain-containing protein 1</fullName>
    </alternativeName>
</protein>
<keyword id="KW-0963">Cytoplasm</keyword>
<keyword id="KW-0458">Lysosome</keyword>
<keyword id="KW-0472">Membrane</keyword>
<keyword id="KW-1185">Reference proteome</keyword>
<accession>Q1LWV7</accession>
<accession>A0JMH4</accession>
<gene>
    <name type="primary">meak7</name>
    <name type="synonym">KIAA1609</name>
    <name type="synonym">tldc1</name>
    <name type="ORF">si:ch211-260p9.6</name>
    <name type="ORF">zgc:153621</name>
</gene>
<sequence>MGNGDSVVAQKRLARFRPDERPAVEGTFDRLHGARSSASAGKTSKGLSLDMLQLTMGKMASESMIKRVFQGLHSIDPGVPLHPGDGVSREQLLIFLADVLRGTAEERAPLVLAMAEGAKATVTTTEQIRGFMEDLVYAAVQTLAHKGHLRAWHPERMGDGAQGVKLLAEQLTSELKPSDQNSCDIACLEDWLFRIPMMAMFLELLIGEGLGVVLPSRPPPTLLPPCQFAPWTDLRCVLSLPLLMFLSPLLPEGHSAPWRMLFSTKMHGESFTRLLGSCKSRGPTVLLVKDTKGYIFGGFSSQSWEVKPQFQGDSRCFLFSVFPYMRVFTCTGYNDHYMYLNQGQQTMPNGLGMGGQHGYFGLWLDYDFGHGHSRARPRCTTYGSPQLSADEDFKLDTLEVWGVGKLPEEQEEDEKKKSILDADLEVQAMMEMTGKTLHSQGLREPEEDED</sequence>
<proteinExistence type="evidence at transcript level"/>
<comment type="function">
    <text evidence="1">Activates an alternative mTOR signaling to regulate cell proliferation and migration.</text>
</comment>
<comment type="subcellular location">
    <subcellularLocation>
        <location evidence="1">Membrane</location>
    </subcellularLocation>
    <subcellularLocation>
        <location evidence="1">Cytoplasm</location>
    </subcellularLocation>
    <subcellularLocation>
        <location evidence="1">Lysosome</location>
    </subcellularLocation>
</comment>
<organism>
    <name type="scientific">Danio rerio</name>
    <name type="common">Zebrafish</name>
    <name type="synonym">Brachydanio rerio</name>
    <dbReference type="NCBI Taxonomy" id="7955"/>
    <lineage>
        <taxon>Eukaryota</taxon>
        <taxon>Metazoa</taxon>
        <taxon>Chordata</taxon>
        <taxon>Craniata</taxon>
        <taxon>Vertebrata</taxon>
        <taxon>Euteleostomi</taxon>
        <taxon>Actinopterygii</taxon>
        <taxon>Neopterygii</taxon>
        <taxon>Teleostei</taxon>
        <taxon>Ostariophysi</taxon>
        <taxon>Cypriniformes</taxon>
        <taxon>Danionidae</taxon>
        <taxon>Danioninae</taxon>
        <taxon>Danio</taxon>
    </lineage>
</organism>
<name>MEAK7_DANRE</name>
<feature type="chain" id="PRO_0000313643" description="MTOR-associated protein MEAK7">
    <location>
        <begin position="1"/>
        <end position="450"/>
    </location>
</feature>
<feature type="domain" description="TLDc" evidence="2">
    <location>
        <begin position="236"/>
        <end position="404"/>
    </location>
</feature>
<feature type="region of interest" description="Disordered" evidence="3">
    <location>
        <begin position="430"/>
        <end position="450"/>
    </location>
</feature>
<feature type="sequence conflict" description="In Ref. 2; AAI25881." evidence="4" ref="2">
    <original>H</original>
    <variation>Q</variation>
    <location>
        <position position="153"/>
    </location>
</feature>
<feature type="sequence conflict" description="In Ref. 2; AAI25881." evidence="4" ref="2">
    <original>S</original>
    <variation>T</variation>
    <location>
        <position position="182"/>
    </location>
</feature>
<feature type="sequence conflict" description="In Ref. 2; AAI25881." evidence="4" ref="2">
    <original>Y</original>
    <variation>H</variation>
    <location>
        <position position="294"/>
    </location>
</feature>
<feature type="sequence conflict" description="In Ref. 2; AAI25881." evidence="4" ref="2">
    <original>S</original>
    <variation>A</variation>
    <location>
        <position position="300"/>
    </location>
</feature>
<feature type="sequence conflict" description="In Ref. 2; AAI25881." evidence="4" ref="2">
    <original>D</original>
    <variation>G</variation>
    <location>
        <position position="448"/>
    </location>
</feature>
<evidence type="ECO:0000250" key="1">
    <source>
        <dbReference type="UniProtKB" id="Q6P9B6"/>
    </source>
</evidence>
<evidence type="ECO:0000255" key="2">
    <source>
        <dbReference type="PROSITE-ProRule" id="PRU01234"/>
    </source>
</evidence>
<evidence type="ECO:0000256" key="3">
    <source>
        <dbReference type="SAM" id="MobiDB-lite"/>
    </source>
</evidence>
<evidence type="ECO:0000305" key="4"/>
<reference key="1">
    <citation type="journal article" date="2013" name="Nature">
        <title>The zebrafish reference genome sequence and its relationship to the human genome.</title>
        <authorList>
            <person name="Howe K."/>
            <person name="Clark M.D."/>
            <person name="Torroja C.F."/>
            <person name="Torrance J."/>
            <person name="Berthelot C."/>
            <person name="Muffato M."/>
            <person name="Collins J.E."/>
            <person name="Humphray S."/>
            <person name="McLaren K."/>
            <person name="Matthews L."/>
            <person name="McLaren S."/>
            <person name="Sealy I."/>
            <person name="Caccamo M."/>
            <person name="Churcher C."/>
            <person name="Scott C."/>
            <person name="Barrett J.C."/>
            <person name="Koch R."/>
            <person name="Rauch G.J."/>
            <person name="White S."/>
            <person name="Chow W."/>
            <person name="Kilian B."/>
            <person name="Quintais L.T."/>
            <person name="Guerra-Assuncao J.A."/>
            <person name="Zhou Y."/>
            <person name="Gu Y."/>
            <person name="Yen J."/>
            <person name="Vogel J.H."/>
            <person name="Eyre T."/>
            <person name="Redmond S."/>
            <person name="Banerjee R."/>
            <person name="Chi J."/>
            <person name="Fu B."/>
            <person name="Langley E."/>
            <person name="Maguire S.F."/>
            <person name="Laird G.K."/>
            <person name="Lloyd D."/>
            <person name="Kenyon E."/>
            <person name="Donaldson S."/>
            <person name="Sehra H."/>
            <person name="Almeida-King J."/>
            <person name="Loveland J."/>
            <person name="Trevanion S."/>
            <person name="Jones M."/>
            <person name="Quail M."/>
            <person name="Willey D."/>
            <person name="Hunt A."/>
            <person name="Burton J."/>
            <person name="Sims S."/>
            <person name="McLay K."/>
            <person name="Plumb B."/>
            <person name="Davis J."/>
            <person name="Clee C."/>
            <person name="Oliver K."/>
            <person name="Clark R."/>
            <person name="Riddle C."/>
            <person name="Elliot D."/>
            <person name="Threadgold G."/>
            <person name="Harden G."/>
            <person name="Ware D."/>
            <person name="Begum S."/>
            <person name="Mortimore B."/>
            <person name="Kerry G."/>
            <person name="Heath P."/>
            <person name="Phillimore B."/>
            <person name="Tracey A."/>
            <person name="Corby N."/>
            <person name="Dunn M."/>
            <person name="Johnson C."/>
            <person name="Wood J."/>
            <person name="Clark S."/>
            <person name="Pelan S."/>
            <person name="Griffiths G."/>
            <person name="Smith M."/>
            <person name="Glithero R."/>
            <person name="Howden P."/>
            <person name="Barker N."/>
            <person name="Lloyd C."/>
            <person name="Stevens C."/>
            <person name="Harley J."/>
            <person name="Holt K."/>
            <person name="Panagiotidis G."/>
            <person name="Lovell J."/>
            <person name="Beasley H."/>
            <person name="Henderson C."/>
            <person name="Gordon D."/>
            <person name="Auger K."/>
            <person name="Wright D."/>
            <person name="Collins J."/>
            <person name="Raisen C."/>
            <person name="Dyer L."/>
            <person name="Leung K."/>
            <person name="Robertson L."/>
            <person name="Ambridge K."/>
            <person name="Leongamornlert D."/>
            <person name="McGuire S."/>
            <person name="Gilderthorp R."/>
            <person name="Griffiths C."/>
            <person name="Manthravadi D."/>
            <person name="Nichol S."/>
            <person name="Barker G."/>
            <person name="Whitehead S."/>
            <person name="Kay M."/>
            <person name="Brown J."/>
            <person name="Murnane C."/>
            <person name="Gray E."/>
            <person name="Humphries M."/>
            <person name="Sycamore N."/>
            <person name="Barker D."/>
            <person name="Saunders D."/>
            <person name="Wallis J."/>
            <person name="Babbage A."/>
            <person name="Hammond S."/>
            <person name="Mashreghi-Mohammadi M."/>
            <person name="Barr L."/>
            <person name="Martin S."/>
            <person name="Wray P."/>
            <person name="Ellington A."/>
            <person name="Matthews N."/>
            <person name="Ellwood M."/>
            <person name="Woodmansey R."/>
            <person name="Clark G."/>
            <person name="Cooper J."/>
            <person name="Tromans A."/>
            <person name="Grafham D."/>
            <person name="Skuce C."/>
            <person name="Pandian R."/>
            <person name="Andrews R."/>
            <person name="Harrison E."/>
            <person name="Kimberley A."/>
            <person name="Garnett J."/>
            <person name="Fosker N."/>
            <person name="Hall R."/>
            <person name="Garner P."/>
            <person name="Kelly D."/>
            <person name="Bird C."/>
            <person name="Palmer S."/>
            <person name="Gehring I."/>
            <person name="Berger A."/>
            <person name="Dooley C.M."/>
            <person name="Ersan-Urun Z."/>
            <person name="Eser C."/>
            <person name="Geiger H."/>
            <person name="Geisler M."/>
            <person name="Karotki L."/>
            <person name="Kirn A."/>
            <person name="Konantz J."/>
            <person name="Konantz M."/>
            <person name="Oberlander M."/>
            <person name="Rudolph-Geiger S."/>
            <person name="Teucke M."/>
            <person name="Lanz C."/>
            <person name="Raddatz G."/>
            <person name="Osoegawa K."/>
            <person name="Zhu B."/>
            <person name="Rapp A."/>
            <person name="Widaa S."/>
            <person name="Langford C."/>
            <person name="Yang F."/>
            <person name="Schuster S.C."/>
            <person name="Carter N.P."/>
            <person name="Harrow J."/>
            <person name="Ning Z."/>
            <person name="Herrero J."/>
            <person name="Searle S.M."/>
            <person name="Enright A."/>
            <person name="Geisler R."/>
            <person name="Plasterk R.H."/>
            <person name="Lee C."/>
            <person name="Westerfield M."/>
            <person name="de Jong P.J."/>
            <person name="Zon L.I."/>
            <person name="Postlethwait J.H."/>
            <person name="Nusslein-Volhard C."/>
            <person name="Hubbard T.J."/>
            <person name="Roest Crollius H."/>
            <person name="Rogers J."/>
            <person name="Stemple D.L."/>
        </authorList>
    </citation>
    <scope>NUCLEOTIDE SEQUENCE [LARGE SCALE GENOMIC DNA]</scope>
    <source>
        <strain>Tuebingen</strain>
    </source>
</reference>
<reference key="2">
    <citation type="submission" date="2006-10" db="EMBL/GenBank/DDBJ databases">
        <authorList>
            <consortium name="NIH - Zebrafish Gene Collection (ZGC) project"/>
        </authorList>
    </citation>
    <scope>NUCLEOTIDE SEQUENCE [LARGE SCALE MRNA]</scope>
    <source>
        <tissue>Testis</tissue>
    </source>
</reference>